<dbReference type="EC" id="1.1.5.4" evidence="1"/>
<dbReference type="EMBL" id="CP000038">
    <property type="protein sequence ID" value="AAZ88915.1"/>
    <property type="molecule type" value="Genomic_DNA"/>
</dbReference>
<dbReference type="RefSeq" id="WP_000758063.1">
    <property type="nucleotide sequence ID" value="NC_007384.1"/>
</dbReference>
<dbReference type="SMR" id="Q3YZZ7"/>
<dbReference type="GeneID" id="93774968"/>
<dbReference type="KEGG" id="ssn:SSON_2268"/>
<dbReference type="HOGENOM" id="CLU_028151_0_0_6"/>
<dbReference type="UniPathway" id="UPA00223">
    <property type="reaction ID" value="UER01008"/>
</dbReference>
<dbReference type="Proteomes" id="UP000002529">
    <property type="component" value="Chromosome"/>
</dbReference>
<dbReference type="GO" id="GO:0047545">
    <property type="term" value="F:2-hydroxyglutarate dehydrogenase activity"/>
    <property type="evidence" value="ECO:0007669"/>
    <property type="project" value="TreeGrafter"/>
</dbReference>
<dbReference type="GO" id="GO:0008924">
    <property type="term" value="F:L-malate dehydrogenase (quinone) activity"/>
    <property type="evidence" value="ECO:0007669"/>
    <property type="project" value="UniProtKB-UniRule"/>
</dbReference>
<dbReference type="GO" id="GO:0006099">
    <property type="term" value="P:tricarboxylic acid cycle"/>
    <property type="evidence" value="ECO:0007669"/>
    <property type="project" value="UniProtKB-UniRule"/>
</dbReference>
<dbReference type="Gene3D" id="3.30.9.10">
    <property type="entry name" value="D-Amino Acid Oxidase, subunit A, domain 2"/>
    <property type="match status" value="1"/>
</dbReference>
<dbReference type="Gene3D" id="3.50.50.60">
    <property type="entry name" value="FAD/NAD(P)-binding domain"/>
    <property type="match status" value="1"/>
</dbReference>
<dbReference type="HAMAP" id="MF_00212">
    <property type="entry name" value="MQO"/>
    <property type="match status" value="1"/>
</dbReference>
<dbReference type="InterPro" id="IPR036188">
    <property type="entry name" value="FAD/NAD-bd_sf"/>
</dbReference>
<dbReference type="InterPro" id="IPR006231">
    <property type="entry name" value="MQO"/>
</dbReference>
<dbReference type="NCBIfam" id="TIGR01320">
    <property type="entry name" value="mal_quin_oxido"/>
    <property type="match status" value="1"/>
</dbReference>
<dbReference type="NCBIfam" id="NF003603">
    <property type="entry name" value="PRK05257.1-1"/>
    <property type="match status" value="1"/>
</dbReference>
<dbReference type="NCBIfam" id="NF003605">
    <property type="entry name" value="PRK05257.1-4"/>
    <property type="match status" value="1"/>
</dbReference>
<dbReference type="NCBIfam" id="NF003606">
    <property type="entry name" value="PRK05257.2-1"/>
    <property type="match status" value="1"/>
</dbReference>
<dbReference type="NCBIfam" id="NF003608">
    <property type="entry name" value="PRK05257.2-4"/>
    <property type="match status" value="1"/>
</dbReference>
<dbReference type="NCBIfam" id="NF003611">
    <property type="entry name" value="PRK05257.3-2"/>
    <property type="match status" value="1"/>
</dbReference>
<dbReference type="NCBIfam" id="NF009875">
    <property type="entry name" value="PRK13339.1"/>
    <property type="match status" value="1"/>
</dbReference>
<dbReference type="PANTHER" id="PTHR43104">
    <property type="entry name" value="L-2-HYDROXYGLUTARATE DEHYDROGENASE, MITOCHONDRIAL"/>
    <property type="match status" value="1"/>
</dbReference>
<dbReference type="PANTHER" id="PTHR43104:SF2">
    <property type="entry name" value="L-2-HYDROXYGLUTARATE DEHYDROGENASE, MITOCHONDRIAL"/>
    <property type="match status" value="1"/>
</dbReference>
<dbReference type="Pfam" id="PF06039">
    <property type="entry name" value="Mqo"/>
    <property type="match status" value="1"/>
</dbReference>
<dbReference type="SUPFAM" id="SSF51905">
    <property type="entry name" value="FAD/NAD(P)-binding domain"/>
    <property type="match status" value="1"/>
</dbReference>
<reference key="1">
    <citation type="journal article" date="2005" name="Nucleic Acids Res.">
        <title>Genome dynamics and diversity of Shigella species, the etiologic agents of bacillary dysentery.</title>
        <authorList>
            <person name="Yang F."/>
            <person name="Yang J."/>
            <person name="Zhang X."/>
            <person name="Chen L."/>
            <person name="Jiang Y."/>
            <person name="Yan Y."/>
            <person name="Tang X."/>
            <person name="Wang J."/>
            <person name="Xiong Z."/>
            <person name="Dong J."/>
            <person name="Xue Y."/>
            <person name="Zhu Y."/>
            <person name="Xu X."/>
            <person name="Sun L."/>
            <person name="Chen S."/>
            <person name="Nie H."/>
            <person name="Peng J."/>
            <person name="Xu J."/>
            <person name="Wang Y."/>
            <person name="Yuan Z."/>
            <person name="Wen Y."/>
            <person name="Yao Z."/>
            <person name="Shen Y."/>
            <person name="Qiang B."/>
            <person name="Hou Y."/>
            <person name="Yu J."/>
            <person name="Jin Q."/>
        </authorList>
    </citation>
    <scope>NUCLEOTIDE SEQUENCE [LARGE SCALE GENOMIC DNA]</scope>
    <source>
        <strain>Ss046</strain>
    </source>
</reference>
<comment type="catalytic activity">
    <reaction evidence="1">
        <text>(S)-malate + a quinone = a quinol + oxaloacetate</text>
        <dbReference type="Rhea" id="RHEA:46012"/>
        <dbReference type="ChEBI" id="CHEBI:15589"/>
        <dbReference type="ChEBI" id="CHEBI:16452"/>
        <dbReference type="ChEBI" id="CHEBI:24646"/>
        <dbReference type="ChEBI" id="CHEBI:132124"/>
        <dbReference type="EC" id="1.1.5.4"/>
    </reaction>
</comment>
<comment type="cofactor">
    <cofactor evidence="1">
        <name>FAD</name>
        <dbReference type="ChEBI" id="CHEBI:57692"/>
    </cofactor>
</comment>
<comment type="pathway">
    <text evidence="1">Carbohydrate metabolism; tricarboxylic acid cycle; oxaloacetate from (S)-malate (quinone route): step 1/1.</text>
</comment>
<comment type="similarity">
    <text evidence="1">Belongs to the MQO family.</text>
</comment>
<evidence type="ECO:0000255" key="1">
    <source>
        <dbReference type="HAMAP-Rule" id="MF_00212"/>
    </source>
</evidence>
<evidence type="ECO:0000256" key="2">
    <source>
        <dbReference type="SAM" id="MobiDB-lite"/>
    </source>
</evidence>
<sequence>MKKVTAMLFSMAVGLNAVSMAAKAKASEEQETDVLLIGGGIMSATLGTYLRELEPEWSMTMVERLEGVAQESSNGWNNAGTGHSALMELNYTPQNADGSISIEKAVAINEAFQISRQFWAHQVERGVLRTPRSFINTVPHMSFVWGEDNVNFLRARYAALQQSSLFRGMRYSEDHAQIKEWAPLVMEGRDPQQKVAATRTEIGTDVNYGEITRQLIASLQKKSNFSLQLSSEVRALKRNDDNTWTVTVADLKNGTAQNIRAKFVFIGAGGAALKLLQESGIPEAKDYAGFPVGGQFLVSENPDVVNHHLAKVYGKASVGAPPMSVPHIDTRVLDGKRVVLFGPFATFSTKFLKNGSLWDLMSSTTTSNVMPMMHVGLDNFDLVKYLVSQVMLSEEDRFEALKEYYPQAKKEDWRLWQAGQRVQIIKRDADKGGVLRLGTEVVSDQQGTIAALLGASPGASTAAPIMLDLLEKVFGDRVSSPQWQATLKAIVPSYGRKLNGDVAATERELQYTSEVLGLKYDKPQAADSTPKPQLKPQPVQKEVADIAL</sequence>
<organism>
    <name type="scientific">Shigella sonnei (strain Ss046)</name>
    <dbReference type="NCBI Taxonomy" id="300269"/>
    <lineage>
        <taxon>Bacteria</taxon>
        <taxon>Pseudomonadati</taxon>
        <taxon>Pseudomonadota</taxon>
        <taxon>Gammaproteobacteria</taxon>
        <taxon>Enterobacterales</taxon>
        <taxon>Enterobacteriaceae</taxon>
        <taxon>Shigella</taxon>
    </lineage>
</organism>
<accession>Q3YZZ7</accession>
<protein>
    <recommendedName>
        <fullName evidence="1">Probable malate:quinone oxidoreductase</fullName>
        <ecNumber evidence="1">1.1.5.4</ecNumber>
    </recommendedName>
    <alternativeName>
        <fullName evidence="1">MQO</fullName>
    </alternativeName>
    <alternativeName>
        <fullName evidence="1">Malate dehydrogenase [quinone]</fullName>
    </alternativeName>
</protein>
<proteinExistence type="inferred from homology"/>
<keyword id="KW-0274">FAD</keyword>
<keyword id="KW-0285">Flavoprotein</keyword>
<keyword id="KW-0560">Oxidoreductase</keyword>
<keyword id="KW-1185">Reference proteome</keyword>
<keyword id="KW-0816">Tricarboxylic acid cycle</keyword>
<gene>
    <name evidence="1" type="primary">mqo</name>
    <name type="ordered locus">SSON_2268</name>
</gene>
<name>MQO_SHISS</name>
<feature type="chain" id="PRO_1000023816" description="Probable malate:quinone oxidoreductase">
    <location>
        <begin position="1"/>
        <end position="548"/>
    </location>
</feature>
<feature type="region of interest" description="Disordered" evidence="2">
    <location>
        <begin position="521"/>
        <end position="548"/>
    </location>
</feature>
<feature type="compositionally biased region" description="Low complexity" evidence="2">
    <location>
        <begin position="530"/>
        <end position="541"/>
    </location>
</feature>